<organism>
    <name type="scientific">Pseudomonas aeruginosa (strain ATCC 15692 / DSM 22644 / CIP 104116 / JCM 14847 / LMG 12228 / 1C / PRS 101 / PAO1)</name>
    <dbReference type="NCBI Taxonomy" id="208964"/>
    <lineage>
        <taxon>Bacteria</taxon>
        <taxon>Pseudomonadati</taxon>
        <taxon>Pseudomonadota</taxon>
        <taxon>Gammaproteobacteria</taxon>
        <taxon>Pseudomonadales</taxon>
        <taxon>Pseudomonadaceae</taxon>
        <taxon>Pseudomonas</taxon>
    </lineage>
</organism>
<reference key="1">
    <citation type="journal article" date="1990" name="J. Bacteriol.">
        <title>Identification and characterization of genes for a second anthranilate synthase in Pseudomonas aeruginosa: interchangeability of the two anthranilate synthases and evolutionary implications.</title>
        <authorList>
            <person name="Essar D.W."/>
            <person name="Eberly L."/>
            <person name="Hadero A."/>
            <person name="Crawford I.P."/>
        </authorList>
    </citation>
    <scope>NUCLEOTIDE SEQUENCE [GENOMIC DNA]</scope>
    <scope>PROBABLE FUNCTION AS AN ANTHRANILATE SYNTHASE</scope>
    <scope>PATHWAY</scope>
    <scope>INDUCTION</scope>
    <scope>DISRUPTION PHENOTYPE</scope>
    <source>
        <strain>ATCC 15692 / DSM 22644 / CIP 104116 / JCM 14847 / LMG 12228 / 1C / PRS 101 / PAO1</strain>
        <strain>PAC174</strain>
    </source>
</reference>
<reference key="2">
    <citation type="journal article" date="2000" name="Nature">
        <title>Complete genome sequence of Pseudomonas aeruginosa PAO1, an opportunistic pathogen.</title>
        <authorList>
            <person name="Stover C.K."/>
            <person name="Pham X.-Q.T."/>
            <person name="Erwin A.L."/>
            <person name="Mizoguchi S.D."/>
            <person name="Warrener P."/>
            <person name="Hickey M.J."/>
            <person name="Brinkman F.S.L."/>
            <person name="Hufnagle W.O."/>
            <person name="Kowalik D.J."/>
            <person name="Lagrou M."/>
            <person name="Garber R.L."/>
            <person name="Goltry L."/>
            <person name="Tolentino E."/>
            <person name="Westbrock-Wadman S."/>
            <person name="Yuan Y."/>
            <person name="Brody L.L."/>
            <person name="Coulter S.N."/>
            <person name="Folger K.R."/>
            <person name="Kas A."/>
            <person name="Larbig K."/>
            <person name="Lim R.M."/>
            <person name="Smith K.A."/>
            <person name="Spencer D.H."/>
            <person name="Wong G.K.-S."/>
            <person name="Wu Z."/>
            <person name="Paulsen I.T."/>
            <person name="Reizer J."/>
            <person name="Saier M.H. Jr."/>
            <person name="Hancock R.E.W."/>
            <person name="Lory S."/>
            <person name="Olson M.V."/>
        </authorList>
    </citation>
    <scope>NUCLEOTIDE SEQUENCE [LARGE SCALE GENOMIC DNA]</scope>
    <source>
        <strain>ATCC 15692 / DSM 22644 / CIP 104116 / JCM 14847 / LMG 12228 / 1C / PRS 101 / PAO1</strain>
    </source>
</reference>
<reference key="3">
    <citation type="journal article" date="1986" name="Mol. Biol. Evol.">
        <title>Structure and regulation of the anthranilate synthase genes in Pseudomonas aeruginosa: I. Sequence of trpG encoding the glutamine amidotransferase subunit.</title>
        <authorList>
            <person name="Crawford I.P."/>
            <person name="Eberly L."/>
        </authorList>
    </citation>
    <scope>NUCLEOTIDE SEQUENCE [GENOMIC DNA] OF 383-530</scope>
    <source>
        <strain>PAC174</strain>
    </source>
</reference>
<reference key="4">
    <citation type="journal article" date="2001" name="J. Bacteriol.">
        <title>Functional analysis of genes for biosynthesis of pyocyanin and phenazine-1-carboxamide from Pseudomonas aeruginosa PAO1.</title>
        <authorList>
            <person name="Mavrodi D.V."/>
            <person name="Bonsall R.F."/>
            <person name="Delaney S.M."/>
            <person name="Soule M.J."/>
            <person name="Phillips G."/>
            <person name="Thomashow L.S."/>
        </authorList>
    </citation>
    <scope>DISCUSSION OF FUNCTION</scope>
</reference>
<reference key="5">
    <citation type="journal article" date="2013" name="Microbiology">
        <title>The role of two Pseudomonas aeruginosa anthranilate synthases in tryptophan and quorum signal production.</title>
        <authorList>
            <person name="Palmer G.C."/>
            <person name="Jorth P.A."/>
            <person name="Whiteley M."/>
        </authorList>
    </citation>
    <scope>FUNCTION IN PQS BIOSYNTHESIS</scope>
    <scope>INDUCTION</scope>
    <scope>DISRUPTION PHENOTYPE</scope>
    <source>
        <strain>UCBPP-PA14</strain>
    </source>
</reference>
<feature type="chain" id="PRO_0000058388" description="Anthranilate synthase component 1, pyocyanine specific">
    <location>
        <begin position="1"/>
        <end position="530"/>
    </location>
</feature>
<feature type="binding site" evidence="1">
    <location>
        <begin position="331"/>
        <end position="332"/>
    </location>
    <ligand>
        <name>substrate</name>
    </ligand>
</feature>
<feature type="binding site" evidence="1">
    <location>
        <position position="364"/>
    </location>
    <ligand>
        <name>Mg(2+)</name>
        <dbReference type="ChEBI" id="CHEBI:18420"/>
    </ligand>
</feature>
<feature type="binding site" evidence="1">
    <location>
        <position position="452"/>
    </location>
    <ligand>
        <name>substrate</name>
    </ligand>
</feature>
<feature type="binding site" evidence="1">
    <location>
        <position position="472"/>
    </location>
    <ligand>
        <name>substrate</name>
    </ligand>
</feature>
<feature type="binding site" evidence="1">
    <location>
        <begin position="486"/>
        <end position="488"/>
    </location>
    <ligand>
        <name>substrate</name>
    </ligand>
</feature>
<feature type="binding site" evidence="1">
    <location>
        <position position="488"/>
    </location>
    <ligand>
        <name>substrate</name>
    </ligand>
</feature>
<feature type="binding site" evidence="1">
    <location>
        <position position="501"/>
    </location>
    <ligand>
        <name>Mg(2+)</name>
        <dbReference type="ChEBI" id="CHEBI:18420"/>
    </ligand>
</feature>
<feature type="sequence variant" description="In strain: PAC174.">
    <original>R</original>
    <variation>G</variation>
    <location>
        <position position="4"/>
    </location>
</feature>
<feature type="sequence variant" description="In strain: PAC174.">
    <original>D</original>
    <variation>A</variation>
    <location>
        <position position="91"/>
    </location>
</feature>
<feature type="sequence variant" description="In strain: PAC174.">
    <original>Q</original>
    <variation>P</variation>
    <location>
        <position position="111"/>
    </location>
</feature>
<feature type="sequence variant" description="In strain: PAC174.">
    <original>S</original>
    <variation>P</variation>
    <location>
        <position position="114"/>
    </location>
</feature>
<feature type="sequence variant" description="In strain: PAC174.">
    <original>V</original>
    <variation>A</variation>
    <location>
        <position position="145"/>
    </location>
</feature>
<feature type="sequence variant" description="In strain: PAC174.">
    <original>R</original>
    <variation>C</variation>
    <location>
        <position position="337"/>
    </location>
</feature>
<sequence>MGARRWLVSGVGYRLEESLEYRTLVPEALSIWRMAGANRMLFDCFDVDSKAARRSVAILSSCLRIECWGRDVVLRALNSNGRALLAPLSEDCPAQVTCLRDGDTLHWRFPQEESHADEWRRLHGLSSLEALRRVLGTLGDAEGPVLLGGLFSFDLAEQFEPLPAPAEPARHCPDYLFLVPELLLDIDHLARRTSLQAFVHDPAGHDRLAASLRQCADEFHGAVEEASESPVAGVRAGNYQVDLDDASFARQVERLQAHVRAGDVFQIVPSRSFSMPCADPWRAYRQLCLRNPSPYRFFLDAGDFCLFGASPESALKYDAESREVELYPIAGTRPRGRDARGAIDAELDNRLEAELRLDAKEIAEHMMLVDLARNDLARVCRSGTRQVRDMLKVDRYSHVMHLVSRVAGELHGELDALHAYRACLNMGTLVGAPKVRAMQLLRQYEDGYRGSYGGAIGILDSAGNLDTSIVIRSAEVREGIARVRAGAGVVLDSDPRLEAEETRNKALAVLTAVAAAERERGERDAHHAVG</sequence>
<dbReference type="EC" id="4.1.3.27"/>
<dbReference type="EMBL" id="M33810">
    <property type="protein sequence ID" value="AAA88448.1"/>
    <property type="molecule type" value="Genomic_DNA"/>
</dbReference>
<dbReference type="EMBL" id="M33811">
    <property type="protein sequence ID" value="AAA88451.1"/>
    <property type="molecule type" value="Genomic_DNA"/>
</dbReference>
<dbReference type="EMBL" id="AE004091">
    <property type="protein sequence ID" value="AAG04390.1"/>
    <property type="molecule type" value="Genomic_DNA"/>
</dbReference>
<dbReference type="EMBL" id="M15733">
    <property type="status" value="NOT_ANNOTATED_CDS"/>
    <property type="molecule type" value="Genomic_DNA"/>
</dbReference>
<dbReference type="PIR" id="B83519">
    <property type="entry name" value="B83519"/>
</dbReference>
<dbReference type="PIR" id="E35116">
    <property type="entry name" value="E35116"/>
</dbReference>
<dbReference type="RefSeq" id="NP_249692.1">
    <property type="nucleotide sequence ID" value="NC_002516.2"/>
</dbReference>
<dbReference type="RefSeq" id="WP_010895533.1">
    <property type="nucleotide sequence ID" value="NZ_QZGE01000006.1"/>
</dbReference>
<dbReference type="SMR" id="P09785"/>
<dbReference type="FunCoup" id="P09785">
    <property type="interactions" value="480"/>
</dbReference>
<dbReference type="STRING" id="208964.PA1001"/>
<dbReference type="PaxDb" id="208964-PA1001"/>
<dbReference type="DNASU" id="878421"/>
<dbReference type="GeneID" id="878421"/>
<dbReference type="KEGG" id="pae:PA1001"/>
<dbReference type="PATRIC" id="fig|208964.12.peg.1033"/>
<dbReference type="PseudoCAP" id="PA1001"/>
<dbReference type="HOGENOM" id="CLU_006493_9_4_6"/>
<dbReference type="InParanoid" id="P09785"/>
<dbReference type="OrthoDB" id="9803598at2"/>
<dbReference type="PhylomeDB" id="P09785"/>
<dbReference type="BioCyc" id="MetaCyc:MONOMER-16007"/>
<dbReference type="BioCyc" id="PAER208964:G1FZ6-1020-MONOMER"/>
<dbReference type="BRENDA" id="4.1.3.27">
    <property type="organism ID" value="5087"/>
</dbReference>
<dbReference type="UniPathway" id="UPA00235"/>
<dbReference type="Proteomes" id="UP000002438">
    <property type="component" value="Chromosome"/>
</dbReference>
<dbReference type="GO" id="GO:0004049">
    <property type="term" value="F:anthranilate synthase activity"/>
    <property type="evidence" value="ECO:0000315"/>
    <property type="project" value="PseudoCAP"/>
</dbReference>
<dbReference type="GO" id="GO:0046872">
    <property type="term" value="F:metal ion binding"/>
    <property type="evidence" value="ECO:0007669"/>
    <property type="project" value="UniProtKB-KW"/>
</dbReference>
<dbReference type="GO" id="GO:0000162">
    <property type="term" value="P:L-tryptophan biosynthetic process"/>
    <property type="evidence" value="ECO:0000318"/>
    <property type="project" value="GO_Central"/>
</dbReference>
<dbReference type="GO" id="GO:0002047">
    <property type="term" value="P:phenazine biosynthetic process"/>
    <property type="evidence" value="ECO:0000315"/>
    <property type="project" value="PseudoCAP"/>
</dbReference>
<dbReference type="Gene3D" id="3.60.120.10">
    <property type="entry name" value="Anthranilate synthase"/>
    <property type="match status" value="1"/>
</dbReference>
<dbReference type="InterPro" id="IPR005801">
    <property type="entry name" value="ADC_synthase"/>
</dbReference>
<dbReference type="InterPro" id="IPR019999">
    <property type="entry name" value="Anth_synth_I-like"/>
</dbReference>
<dbReference type="InterPro" id="IPR006805">
    <property type="entry name" value="Anth_synth_I_N"/>
</dbReference>
<dbReference type="InterPro" id="IPR005257">
    <property type="entry name" value="Anth_synth_I_TrpE"/>
</dbReference>
<dbReference type="InterPro" id="IPR015890">
    <property type="entry name" value="Chorismate_C"/>
</dbReference>
<dbReference type="NCBIfam" id="NF010079">
    <property type="entry name" value="PRK13564.1"/>
    <property type="match status" value="1"/>
</dbReference>
<dbReference type="NCBIfam" id="TIGR00565">
    <property type="entry name" value="trpE_proteo"/>
    <property type="match status" value="1"/>
</dbReference>
<dbReference type="PANTHER" id="PTHR11236">
    <property type="entry name" value="AMINOBENZOATE/ANTHRANILATE SYNTHASE"/>
    <property type="match status" value="1"/>
</dbReference>
<dbReference type="PANTHER" id="PTHR11236:SF49">
    <property type="entry name" value="ANTHRANILATE SYNTHASE COMPONENT 1"/>
    <property type="match status" value="1"/>
</dbReference>
<dbReference type="Pfam" id="PF04715">
    <property type="entry name" value="Anth_synt_I_N"/>
    <property type="match status" value="1"/>
</dbReference>
<dbReference type="Pfam" id="PF00425">
    <property type="entry name" value="Chorismate_bind"/>
    <property type="match status" value="1"/>
</dbReference>
<dbReference type="PIRSF" id="PIRSF001373">
    <property type="entry name" value="TrpE"/>
    <property type="match status" value="1"/>
</dbReference>
<dbReference type="PRINTS" id="PR00095">
    <property type="entry name" value="ANTSNTHASEI"/>
</dbReference>
<dbReference type="SUPFAM" id="SSF56322">
    <property type="entry name" value="ADC synthase"/>
    <property type="match status" value="1"/>
</dbReference>
<gene>
    <name evidence="5" type="primary">phnA</name>
    <name evidence="6" type="synonym">trpE</name>
    <name type="ordered locus">PA1001</name>
</gene>
<keyword id="KW-0456">Lyase</keyword>
<keyword id="KW-0460">Magnesium</keyword>
<keyword id="KW-0479">Metal-binding</keyword>
<keyword id="KW-1185">Reference proteome</keyword>
<keyword id="KW-0843">Virulence</keyword>
<comment type="function">
    <text evidence="1 2 3 4">Part of a heterotetrameric complex that catalyzes the two-step biosynthesis of anthranilate, a precursor for Pseudomonas quinolone signal (2-heptyl-3-hydroxy-4-quinolone; PQS) production which is required to induce the genes for the biosynthesis of the virulence factor pyocyanine (PCN), a characteristic blue-green phenazine pigment produced by P.aeruginosa (PubMed:11591691, PubMed:2153661, PubMed:23449919). In the first step, the glutamine-binding beta subunit (PhnB) of anthranilate synthase (AS) provides the glutamine amidotransferase activity which generates ammonia as a substrate that, along with chorismate, is used in the second step, catalyzed by the large alpha subunit of AS (PhnA) to produce anthranilate (By similarity).</text>
</comment>
<comment type="catalytic activity">
    <reaction evidence="8">
        <text>chorismate + L-glutamine = anthranilate + pyruvate + L-glutamate + H(+)</text>
        <dbReference type="Rhea" id="RHEA:21732"/>
        <dbReference type="ChEBI" id="CHEBI:15361"/>
        <dbReference type="ChEBI" id="CHEBI:15378"/>
        <dbReference type="ChEBI" id="CHEBI:16567"/>
        <dbReference type="ChEBI" id="CHEBI:29748"/>
        <dbReference type="ChEBI" id="CHEBI:29985"/>
        <dbReference type="ChEBI" id="CHEBI:58359"/>
        <dbReference type="EC" id="4.1.3.27"/>
    </reaction>
</comment>
<comment type="cofactor">
    <cofactor evidence="1">
        <name>Mg(2+)</name>
        <dbReference type="ChEBI" id="CHEBI:18420"/>
    </cofactor>
    <text evidence="1">Binds 1 Mg(2+) ion per subunit.</text>
</comment>
<comment type="pathway">
    <text evidence="8">Secondary metabolite biosynthesis; pyocyanine biosynthesis.</text>
</comment>
<comment type="subunit">
    <text evidence="1">Heterotetramer consisting of two non-identical subunits: a beta subunit (PhnB) and a large alpha subunit (PhnA).</text>
</comment>
<comment type="induction">
    <text evidence="3 4">Expression increases as cell grow from early to late log phase and further increases in stationary phase; there is about 10-fold more mRNA in stationary than early log phase.</text>
</comment>
<comment type="disruption phenotype">
    <text evidence="3 4">Disruption of phnA alone yields 22-34% pyocyanine. Double trpE-phnA disruption requires anthranilate or L-tryptophan for growth on minimal medium and does not make pyocyanine (PubMed:2153661). Double phnA-phnB deletions are tryptophan prototrophs; they make less PQS (PubMed:23449919).</text>
</comment>
<comment type="miscellaneous">
    <text evidence="8">PhnAB is not feedback inhibited by tryptophan.</text>
</comment>
<comment type="miscellaneous">
    <text>The sequence shown is that of strain PAO.</text>
</comment>
<comment type="similarity">
    <text evidence="7">Belongs to the anthranilate synthase component I family.</text>
</comment>
<evidence type="ECO:0000250" key="1">
    <source>
        <dbReference type="UniProtKB" id="P00897"/>
    </source>
</evidence>
<evidence type="ECO:0000269" key="2">
    <source>
    </source>
</evidence>
<evidence type="ECO:0000269" key="3">
    <source>
    </source>
</evidence>
<evidence type="ECO:0000269" key="4">
    <source>
    </source>
</evidence>
<evidence type="ECO:0000303" key="5">
    <source>
    </source>
</evidence>
<evidence type="ECO:0000303" key="6">
    <source>
    </source>
</evidence>
<evidence type="ECO:0000305" key="7"/>
<evidence type="ECO:0000305" key="8">
    <source>
    </source>
</evidence>
<protein>
    <recommendedName>
        <fullName>Anthranilate synthase component 1, pyocyanine specific</fullName>
        <shortName>AS</shortName>
        <shortName>ASI</shortName>
        <ecNumber>4.1.3.27</ecNumber>
    </recommendedName>
    <alternativeName>
        <fullName evidence="5">Anthranilate synthase alpha subunit, pyocyanine specific</fullName>
    </alternativeName>
</protein>
<proteinExistence type="evidence at protein level"/>
<accession>P09785</accession>
<name>PHNA_PSEAE</name>